<sequence length="576" mass="62999">MDKELFRHQIEVAAKRKKAALVIKHAKVMDVFNQEWIDADVAVENGQIVGIGEYEGEQELDAVGQMLVPGFIDGHVHIESSMVTPAEFSKAVVPHGVTTVVTDPHEIANVSGITGIRFMLEEAKKAALHIYFMLPSCVPAVSFERSGATLKAKDLKPLYQEKEVLGLAEVMDYVGVEQAEEDMLQKLLDAQHENKLIDGHLAGLTDRLINVYRTASVQTDHEVTTAQEALERVKRGMYVMLREGSVAKNVKNVLPAVNEKNARRFFFCTDDKHLDDLMAQGSIDEQVRMSIKEGLDPFLAYQMGSLNAAECFGLKTKGAIAPGYDADFMLVSDFHHVDITSVFIAGELVAQNGEYKPSVEKIAPSPALLQSVHAIDVQEEDIALPITGDQHMNVIRIIPNQLETKLEQVSPSEMNGQFTSDTGRDVLKMVLVERHQGLSEMGVGIVSGFGIKQGAIATTVAHDSHNLIAVGTNDADIIKAIEALKEAGGGLTVVKEGQSLHTLPLPISGLLSDQPAHLVNESLHSLHEALKETGFSLDFNPFLTLSFLALPVIPDVKMTTKGLFDVRNFQHLPIQS</sequence>
<reference key="1">
    <citation type="journal article" date="2007" name="PLoS ONE">
        <title>Paradoxical DNA repair and peroxide resistance gene conservation in Bacillus pumilus SAFR-032.</title>
        <authorList>
            <person name="Gioia J."/>
            <person name="Yerrapragada S."/>
            <person name="Qin X."/>
            <person name="Jiang H."/>
            <person name="Igboeli O.C."/>
            <person name="Muzny D."/>
            <person name="Dugan-Rocha S."/>
            <person name="Ding Y."/>
            <person name="Hawes A."/>
            <person name="Liu W."/>
            <person name="Perez L."/>
            <person name="Kovar C."/>
            <person name="Dinh H."/>
            <person name="Lee S."/>
            <person name="Nazareth L."/>
            <person name="Blyth P."/>
            <person name="Holder M."/>
            <person name="Buhay C."/>
            <person name="Tirumalai M.R."/>
            <person name="Liu Y."/>
            <person name="Dasgupta I."/>
            <person name="Bokhetache L."/>
            <person name="Fujita M."/>
            <person name="Karouia F."/>
            <person name="Eswara Moorthy P."/>
            <person name="Siefert J."/>
            <person name="Uzman A."/>
            <person name="Buzumbo P."/>
            <person name="Verma A."/>
            <person name="Zwiya H."/>
            <person name="McWilliams B.D."/>
            <person name="Olowu A."/>
            <person name="Clinkenbeard K.D."/>
            <person name="Newcombe D."/>
            <person name="Golebiewski L."/>
            <person name="Petrosino J.F."/>
            <person name="Nicholson W.L."/>
            <person name="Fox G.E."/>
            <person name="Venkateswaran K."/>
            <person name="Highlander S.K."/>
            <person name="Weinstock G.M."/>
        </authorList>
    </citation>
    <scope>NUCLEOTIDE SEQUENCE [LARGE SCALE GENOMIC DNA]</scope>
    <source>
        <strain>SAFR-032</strain>
    </source>
</reference>
<feature type="chain" id="PRO_1000068608" description="Adenine deaminase">
    <location>
        <begin position="1"/>
        <end position="576"/>
    </location>
</feature>
<keyword id="KW-0378">Hydrolase</keyword>
<keyword id="KW-0464">Manganese</keyword>
<comment type="catalytic activity">
    <reaction evidence="1">
        <text>adenine + H2O + H(+) = hypoxanthine + NH4(+)</text>
        <dbReference type="Rhea" id="RHEA:23688"/>
        <dbReference type="ChEBI" id="CHEBI:15377"/>
        <dbReference type="ChEBI" id="CHEBI:15378"/>
        <dbReference type="ChEBI" id="CHEBI:16708"/>
        <dbReference type="ChEBI" id="CHEBI:17368"/>
        <dbReference type="ChEBI" id="CHEBI:28938"/>
        <dbReference type="EC" id="3.5.4.2"/>
    </reaction>
</comment>
<comment type="cofactor">
    <cofactor evidence="1">
        <name>Mn(2+)</name>
        <dbReference type="ChEBI" id="CHEBI:29035"/>
    </cofactor>
</comment>
<comment type="similarity">
    <text evidence="1">Belongs to the metallo-dependent hydrolases superfamily. Adenine deaminase family.</text>
</comment>
<proteinExistence type="inferred from homology"/>
<gene>
    <name evidence="1" type="primary">ade</name>
    <name type="ordered locus">BPUM_1348</name>
</gene>
<accession>A8FCR4</accession>
<name>ADEC_BACP2</name>
<evidence type="ECO:0000255" key="1">
    <source>
        <dbReference type="HAMAP-Rule" id="MF_01518"/>
    </source>
</evidence>
<organism>
    <name type="scientific">Bacillus pumilus (strain SAFR-032)</name>
    <dbReference type="NCBI Taxonomy" id="315750"/>
    <lineage>
        <taxon>Bacteria</taxon>
        <taxon>Bacillati</taxon>
        <taxon>Bacillota</taxon>
        <taxon>Bacilli</taxon>
        <taxon>Bacillales</taxon>
        <taxon>Bacillaceae</taxon>
        <taxon>Bacillus</taxon>
    </lineage>
</organism>
<protein>
    <recommendedName>
        <fullName evidence="1">Adenine deaminase</fullName>
        <shortName evidence="1">Adenase</shortName>
        <shortName evidence="1">Adenine aminase</shortName>
        <ecNumber evidence="1">3.5.4.2</ecNumber>
    </recommendedName>
</protein>
<dbReference type="EC" id="3.5.4.2" evidence="1"/>
<dbReference type="EMBL" id="CP000813">
    <property type="protein sequence ID" value="ABV62031.1"/>
    <property type="molecule type" value="Genomic_DNA"/>
</dbReference>
<dbReference type="RefSeq" id="WP_012009817.1">
    <property type="nucleotide sequence ID" value="NC_009848.4"/>
</dbReference>
<dbReference type="SMR" id="A8FCR4"/>
<dbReference type="STRING" id="315750.BPUM_1348"/>
<dbReference type="GeneID" id="5620611"/>
<dbReference type="KEGG" id="bpu:BPUM_1348"/>
<dbReference type="eggNOG" id="COG1001">
    <property type="taxonomic scope" value="Bacteria"/>
</dbReference>
<dbReference type="HOGENOM" id="CLU_027935_0_0_9"/>
<dbReference type="OrthoDB" id="9775607at2"/>
<dbReference type="Proteomes" id="UP000001355">
    <property type="component" value="Chromosome"/>
</dbReference>
<dbReference type="GO" id="GO:0000034">
    <property type="term" value="F:adenine deaminase activity"/>
    <property type="evidence" value="ECO:0007669"/>
    <property type="project" value="UniProtKB-UniRule"/>
</dbReference>
<dbReference type="GO" id="GO:0006146">
    <property type="term" value="P:adenine catabolic process"/>
    <property type="evidence" value="ECO:0007669"/>
    <property type="project" value="InterPro"/>
</dbReference>
<dbReference type="CDD" id="cd01295">
    <property type="entry name" value="AdeC"/>
    <property type="match status" value="1"/>
</dbReference>
<dbReference type="FunFam" id="3.20.20.140:FF:000016">
    <property type="entry name" value="Adenine deaminase"/>
    <property type="match status" value="1"/>
</dbReference>
<dbReference type="Gene3D" id="3.20.20.140">
    <property type="entry name" value="Metal-dependent hydrolases"/>
    <property type="match status" value="1"/>
</dbReference>
<dbReference type="Gene3D" id="2.30.40.10">
    <property type="entry name" value="Urease, subunit C, domain 1"/>
    <property type="match status" value="1"/>
</dbReference>
<dbReference type="HAMAP" id="MF_01518">
    <property type="entry name" value="Adenine_deamin"/>
    <property type="match status" value="1"/>
</dbReference>
<dbReference type="InterPro" id="IPR006679">
    <property type="entry name" value="Adenine_deam"/>
</dbReference>
<dbReference type="InterPro" id="IPR026912">
    <property type="entry name" value="Adenine_deam_C"/>
</dbReference>
<dbReference type="InterPro" id="IPR006680">
    <property type="entry name" value="Amidohydro-rel"/>
</dbReference>
<dbReference type="InterPro" id="IPR011059">
    <property type="entry name" value="Metal-dep_hydrolase_composite"/>
</dbReference>
<dbReference type="InterPro" id="IPR032466">
    <property type="entry name" value="Metal_Hydrolase"/>
</dbReference>
<dbReference type="NCBIfam" id="TIGR01178">
    <property type="entry name" value="ade"/>
    <property type="match status" value="1"/>
</dbReference>
<dbReference type="PANTHER" id="PTHR11113:SF2">
    <property type="entry name" value="ADENINE DEAMINASE"/>
    <property type="match status" value="1"/>
</dbReference>
<dbReference type="PANTHER" id="PTHR11113">
    <property type="entry name" value="N-ACETYLGLUCOSAMINE-6-PHOSPHATE DEACETYLASE"/>
    <property type="match status" value="1"/>
</dbReference>
<dbReference type="Pfam" id="PF13382">
    <property type="entry name" value="Adenine_deam_C"/>
    <property type="match status" value="1"/>
</dbReference>
<dbReference type="Pfam" id="PF01979">
    <property type="entry name" value="Amidohydro_1"/>
    <property type="match status" value="1"/>
</dbReference>
<dbReference type="SUPFAM" id="SSF51338">
    <property type="entry name" value="Composite domain of metallo-dependent hydrolases"/>
    <property type="match status" value="1"/>
</dbReference>
<dbReference type="SUPFAM" id="SSF51556">
    <property type="entry name" value="Metallo-dependent hydrolases"/>
    <property type="match status" value="1"/>
</dbReference>